<feature type="chain" id="PRO_0000272939" description="Large ribosomal subunit protein uL23c">
    <location>
        <begin position="1"/>
        <end position="89"/>
    </location>
</feature>
<accession>Q32RN9</accession>
<keyword id="KW-0150">Chloroplast</keyword>
<keyword id="KW-0934">Plastid</keyword>
<keyword id="KW-0687">Ribonucleoprotein</keyword>
<keyword id="KW-0689">Ribosomal protein</keyword>
<keyword id="KW-0694">RNA-binding</keyword>
<keyword id="KW-0699">rRNA-binding</keyword>
<gene>
    <name type="primary">rpl23</name>
</gene>
<comment type="function">
    <text evidence="1">Binds to 23S rRNA.</text>
</comment>
<comment type="subunit">
    <text evidence="1">Part of the 50S ribosomal subunit.</text>
</comment>
<comment type="subcellular location">
    <subcellularLocation>
        <location>Plastid</location>
        <location>Chloroplast</location>
    </subcellularLocation>
</comment>
<comment type="similarity">
    <text evidence="2">Belongs to the universal ribosomal protein uL23 family.</text>
</comment>
<name>RK23_ZYGCR</name>
<protein>
    <recommendedName>
        <fullName evidence="2">Large ribosomal subunit protein uL23c</fullName>
    </recommendedName>
    <alternativeName>
        <fullName>50S ribosomal protein L23, chloroplastic</fullName>
    </alternativeName>
</protein>
<evidence type="ECO:0000250" key="1"/>
<evidence type="ECO:0000305" key="2"/>
<reference key="1">
    <citation type="journal article" date="2005" name="BMC Biol.">
        <title>The complete chloroplast DNA sequences of the charophycean green algae Staurastrum and Zygnema reveal that the chloroplast genome underwent extensive changes during the evolution of the Zygnematales.</title>
        <authorList>
            <person name="Turmel M."/>
            <person name="Otis C."/>
            <person name="Lemieux C."/>
        </authorList>
    </citation>
    <scope>NUCLEOTIDE SEQUENCE [LARGE SCALE GENOMIC DNA]</scope>
</reference>
<dbReference type="EMBL" id="AY958086">
    <property type="protein sequence ID" value="AAX45857.1"/>
    <property type="molecule type" value="Genomic_DNA"/>
</dbReference>
<dbReference type="RefSeq" id="YP_636487.1">
    <property type="nucleotide sequence ID" value="NC_008117.1"/>
</dbReference>
<dbReference type="SMR" id="Q32RN9"/>
<dbReference type="GeneID" id="4108177"/>
<dbReference type="GO" id="GO:0009507">
    <property type="term" value="C:chloroplast"/>
    <property type="evidence" value="ECO:0007669"/>
    <property type="project" value="UniProtKB-SubCell"/>
</dbReference>
<dbReference type="GO" id="GO:1990904">
    <property type="term" value="C:ribonucleoprotein complex"/>
    <property type="evidence" value="ECO:0007669"/>
    <property type="project" value="UniProtKB-KW"/>
</dbReference>
<dbReference type="GO" id="GO:0005840">
    <property type="term" value="C:ribosome"/>
    <property type="evidence" value="ECO:0007669"/>
    <property type="project" value="UniProtKB-KW"/>
</dbReference>
<dbReference type="GO" id="GO:0019843">
    <property type="term" value="F:rRNA binding"/>
    <property type="evidence" value="ECO:0007669"/>
    <property type="project" value="UniProtKB-UniRule"/>
</dbReference>
<dbReference type="GO" id="GO:0003735">
    <property type="term" value="F:structural constituent of ribosome"/>
    <property type="evidence" value="ECO:0007669"/>
    <property type="project" value="InterPro"/>
</dbReference>
<dbReference type="GO" id="GO:0006412">
    <property type="term" value="P:translation"/>
    <property type="evidence" value="ECO:0007669"/>
    <property type="project" value="UniProtKB-UniRule"/>
</dbReference>
<dbReference type="Gene3D" id="3.30.70.330">
    <property type="match status" value="1"/>
</dbReference>
<dbReference type="HAMAP" id="MF_01369_B">
    <property type="entry name" value="Ribosomal_uL23_B"/>
    <property type="match status" value="1"/>
</dbReference>
<dbReference type="InterPro" id="IPR012677">
    <property type="entry name" value="Nucleotide-bd_a/b_plait_sf"/>
</dbReference>
<dbReference type="InterPro" id="IPR013025">
    <property type="entry name" value="Ribosomal_uL23-like"/>
</dbReference>
<dbReference type="InterPro" id="IPR012678">
    <property type="entry name" value="Ribosomal_uL23/eL15/eS24_sf"/>
</dbReference>
<dbReference type="InterPro" id="IPR001014">
    <property type="entry name" value="Ribosomal_uL23_CS"/>
</dbReference>
<dbReference type="Pfam" id="PF00276">
    <property type="entry name" value="Ribosomal_L23"/>
    <property type="match status" value="1"/>
</dbReference>
<dbReference type="SUPFAM" id="SSF54189">
    <property type="entry name" value="Ribosomal proteins S24e, L23 and L15e"/>
    <property type="match status" value="1"/>
</dbReference>
<dbReference type="PROSITE" id="PS00050">
    <property type="entry name" value="RIBOSOMAL_L23"/>
    <property type="match status" value="1"/>
</dbReference>
<sequence length="89" mass="10213">MIDYIKSTVRNRNTIRLLEKNQYTFDVDPKATKTEVKRLIEGVFGVKVIGMNSKRLPIKQKRKGPTAGYAVRYKRMIVTLNSTDSIPVI</sequence>
<organism>
    <name type="scientific">Zygnema circumcarinatum</name>
    <name type="common">Green alga</name>
    <dbReference type="NCBI Taxonomy" id="35869"/>
    <lineage>
        <taxon>Eukaryota</taxon>
        <taxon>Viridiplantae</taxon>
        <taxon>Streptophyta</taxon>
        <taxon>Zygnematophyceae</taxon>
        <taxon>Zygnematophycidae</taxon>
        <taxon>Zygnematales</taxon>
        <taxon>Zygnemataceae</taxon>
        <taxon>Zygnema</taxon>
    </lineage>
</organism>
<geneLocation type="chloroplast"/>
<proteinExistence type="inferred from homology"/>